<organism>
    <name type="scientific">Bacillus subtilis (strain 168)</name>
    <dbReference type="NCBI Taxonomy" id="224308"/>
    <lineage>
        <taxon>Bacteria</taxon>
        <taxon>Bacillati</taxon>
        <taxon>Bacillota</taxon>
        <taxon>Bacilli</taxon>
        <taxon>Bacillales</taxon>
        <taxon>Bacillaceae</taxon>
        <taxon>Bacillus</taxon>
    </lineage>
</organism>
<protein>
    <recommendedName>
        <fullName>Uncharacterized protein YwnG</fullName>
    </recommendedName>
</protein>
<reference key="1">
    <citation type="journal article" date="1997" name="J. Bacteriol.">
        <title>The Bacillus subtilis ureABC operon.</title>
        <authorList>
            <person name="Cruz-Ramos H."/>
            <person name="Glaser P."/>
            <person name="Wray L.V. Jr."/>
            <person name="Fisher S.H."/>
        </authorList>
    </citation>
    <scope>NUCLEOTIDE SEQUENCE [GENOMIC DNA]</scope>
    <source>
        <strain>168</strain>
    </source>
</reference>
<reference key="2">
    <citation type="journal article" date="1997" name="Nature">
        <title>The complete genome sequence of the Gram-positive bacterium Bacillus subtilis.</title>
        <authorList>
            <person name="Kunst F."/>
            <person name="Ogasawara N."/>
            <person name="Moszer I."/>
            <person name="Albertini A.M."/>
            <person name="Alloni G."/>
            <person name="Azevedo V."/>
            <person name="Bertero M.G."/>
            <person name="Bessieres P."/>
            <person name="Bolotin A."/>
            <person name="Borchert S."/>
            <person name="Borriss R."/>
            <person name="Boursier L."/>
            <person name="Brans A."/>
            <person name="Braun M."/>
            <person name="Brignell S.C."/>
            <person name="Bron S."/>
            <person name="Brouillet S."/>
            <person name="Bruschi C.V."/>
            <person name="Caldwell B."/>
            <person name="Capuano V."/>
            <person name="Carter N.M."/>
            <person name="Choi S.-K."/>
            <person name="Codani J.-J."/>
            <person name="Connerton I.F."/>
            <person name="Cummings N.J."/>
            <person name="Daniel R.A."/>
            <person name="Denizot F."/>
            <person name="Devine K.M."/>
            <person name="Duesterhoeft A."/>
            <person name="Ehrlich S.D."/>
            <person name="Emmerson P.T."/>
            <person name="Entian K.-D."/>
            <person name="Errington J."/>
            <person name="Fabret C."/>
            <person name="Ferrari E."/>
            <person name="Foulger D."/>
            <person name="Fritz C."/>
            <person name="Fujita M."/>
            <person name="Fujita Y."/>
            <person name="Fuma S."/>
            <person name="Galizzi A."/>
            <person name="Galleron N."/>
            <person name="Ghim S.-Y."/>
            <person name="Glaser P."/>
            <person name="Goffeau A."/>
            <person name="Golightly E.J."/>
            <person name="Grandi G."/>
            <person name="Guiseppi G."/>
            <person name="Guy B.J."/>
            <person name="Haga K."/>
            <person name="Haiech J."/>
            <person name="Harwood C.R."/>
            <person name="Henaut A."/>
            <person name="Hilbert H."/>
            <person name="Holsappel S."/>
            <person name="Hosono S."/>
            <person name="Hullo M.-F."/>
            <person name="Itaya M."/>
            <person name="Jones L.-M."/>
            <person name="Joris B."/>
            <person name="Karamata D."/>
            <person name="Kasahara Y."/>
            <person name="Klaerr-Blanchard M."/>
            <person name="Klein C."/>
            <person name="Kobayashi Y."/>
            <person name="Koetter P."/>
            <person name="Koningstein G."/>
            <person name="Krogh S."/>
            <person name="Kumano M."/>
            <person name="Kurita K."/>
            <person name="Lapidus A."/>
            <person name="Lardinois S."/>
            <person name="Lauber J."/>
            <person name="Lazarevic V."/>
            <person name="Lee S.-M."/>
            <person name="Levine A."/>
            <person name="Liu H."/>
            <person name="Masuda S."/>
            <person name="Mauel C."/>
            <person name="Medigue C."/>
            <person name="Medina N."/>
            <person name="Mellado R.P."/>
            <person name="Mizuno M."/>
            <person name="Moestl D."/>
            <person name="Nakai S."/>
            <person name="Noback M."/>
            <person name="Noone D."/>
            <person name="O'Reilly M."/>
            <person name="Ogawa K."/>
            <person name="Ogiwara A."/>
            <person name="Oudega B."/>
            <person name="Park S.-H."/>
            <person name="Parro V."/>
            <person name="Pohl T.M."/>
            <person name="Portetelle D."/>
            <person name="Porwollik S."/>
            <person name="Prescott A.M."/>
            <person name="Presecan E."/>
            <person name="Pujic P."/>
            <person name="Purnelle B."/>
            <person name="Rapoport G."/>
            <person name="Rey M."/>
            <person name="Reynolds S."/>
            <person name="Rieger M."/>
            <person name="Rivolta C."/>
            <person name="Rocha E."/>
            <person name="Roche B."/>
            <person name="Rose M."/>
            <person name="Sadaie Y."/>
            <person name="Sato T."/>
            <person name="Scanlan E."/>
            <person name="Schleich S."/>
            <person name="Schroeter R."/>
            <person name="Scoffone F."/>
            <person name="Sekiguchi J."/>
            <person name="Sekowska A."/>
            <person name="Seror S.J."/>
            <person name="Serror P."/>
            <person name="Shin B.-S."/>
            <person name="Soldo B."/>
            <person name="Sorokin A."/>
            <person name="Tacconi E."/>
            <person name="Takagi T."/>
            <person name="Takahashi H."/>
            <person name="Takemaru K."/>
            <person name="Takeuchi M."/>
            <person name="Tamakoshi A."/>
            <person name="Tanaka T."/>
            <person name="Terpstra P."/>
            <person name="Tognoni A."/>
            <person name="Tosato V."/>
            <person name="Uchiyama S."/>
            <person name="Vandenbol M."/>
            <person name="Vannier F."/>
            <person name="Vassarotti A."/>
            <person name="Viari A."/>
            <person name="Wambutt R."/>
            <person name="Wedler E."/>
            <person name="Wedler H."/>
            <person name="Weitzenegger T."/>
            <person name="Winters P."/>
            <person name="Wipat A."/>
            <person name="Yamamoto H."/>
            <person name="Yamane K."/>
            <person name="Yasumoto K."/>
            <person name="Yata K."/>
            <person name="Yoshida K."/>
            <person name="Yoshikawa H.-F."/>
            <person name="Zumstein E."/>
            <person name="Yoshikawa H."/>
            <person name="Danchin A."/>
        </authorList>
    </citation>
    <scope>NUCLEOTIDE SEQUENCE [LARGE SCALE GENOMIC DNA]</scope>
    <source>
        <strain>168</strain>
    </source>
</reference>
<gene>
    <name type="primary">ywnG</name>
    <name type="ordered locus">BSU36570</name>
</gene>
<accession>P71042</accession>
<name>YWNG_BACSU</name>
<keyword id="KW-0472">Membrane</keyword>
<keyword id="KW-1185">Reference proteome</keyword>
<keyword id="KW-0812">Transmembrane</keyword>
<keyword id="KW-1133">Transmembrane helix</keyword>
<proteinExistence type="predicted"/>
<sequence>MISLDKDENEIEHHNEENSLVEQETAPVGQESRQLSASAVKSLSDIAKWGKISGILLIIMGSLVTLSVLMTVIGAIPGVLLIISGVFLMRSAKAAAEAEGNLTGSAGESMLENYGTFIKMQLFYAASSIVTVLIGIIVAIFVLVVIGIAAFENTPSYDDPDSYYYEDDPVFE</sequence>
<evidence type="ECO:0000255" key="1"/>
<evidence type="ECO:0000256" key="2">
    <source>
        <dbReference type="SAM" id="MobiDB-lite"/>
    </source>
</evidence>
<evidence type="ECO:0000305" key="3"/>
<feature type="chain" id="PRO_0000049989" description="Uncharacterized protein YwnG">
    <location>
        <begin position="1"/>
        <end position="172"/>
    </location>
</feature>
<feature type="transmembrane region" description="Helical" evidence="1">
    <location>
        <begin position="129"/>
        <end position="151"/>
    </location>
</feature>
<feature type="region of interest" description="Disordered" evidence="2">
    <location>
        <begin position="1"/>
        <end position="27"/>
    </location>
</feature>
<feature type="compositionally biased region" description="Basic and acidic residues" evidence="2">
    <location>
        <begin position="1"/>
        <end position="17"/>
    </location>
</feature>
<comment type="subcellular location">
    <subcellularLocation>
        <location evidence="3">Membrane</location>
        <topology evidence="3">Single-pass membrane protein</topology>
    </subcellularLocation>
</comment>
<dbReference type="EMBL" id="Y08559">
    <property type="protein sequence ID" value="CAA69866.1"/>
    <property type="molecule type" value="Genomic_DNA"/>
</dbReference>
<dbReference type="EMBL" id="AL009126">
    <property type="protein sequence ID" value="CAB15674.1"/>
    <property type="molecule type" value="Genomic_DNA"/>
</dbReference>
<dbReference type="PIR" id="A70064">
    <property type="entry name" value="A70064"/>
</dbReference>
<dbReference type="RefSeq" id="NP_391538.1">
    <property type="nucleotide sequence ID" value="NC_000964.3"/>
</dbReference>
<dbReference type="RefSeq" id="WP_003227749.1">
    <property type="nucleotide sequence ID" value="NZ_OZ025638.1"/>
</dbReference>
<dbReference type="FunCoup" id="P71042">
    <property type="interactions" value="8"/>
</dbReference>
<dbReference type="IntAct" id="P71042">
    <property type="interactions" value="2"/>
</dbReference>
<dbReference type="STRING" id="224308.BSU36570"/>
<dbReference type="jPOST" id="P71042"/>
<dbReference type="PaxDb" id="224308-BSU36570"/>
<dbReference type="EnsemblBacteria" id="CAB15674">
    <property type="protein sequence ID" value="CAB15674"/>
    <property type="gene ID" value="BSU_36570"/>
</dbReference>
<dbReference type="GeneID" id="936941"/>
<dbReference type="KEGG" id="bsu:BSU36570"/>
<dbReference type="PATRIC" id="fig|224308.179.peg.3957"/>
<dbReference type="InParanoid" id="P71042"/>
<dbReference type="OrthoDB" id="2939744at2"/>
<dbReference type="BioCyc" id="BSUB:BSU36570-MONOMER"/>
<dbReference type="Proteomes" id="UP000001570">
    <property type="component" value="Chromosome"/>
</dbReference>
<dbReference type="GO" id="GO:0016020">
    <property type="term" value="C:membrane"/>
    <property type="evidence" value="ECO:0007669"/>
    <property type="project" value="UniProtKB-SubCell"/>
</dbReference>
<dbReference type="InterPro" id="IPR035287">
    <property type="entry name" value="DUF5362"/>
</dbReference>
<dbReference type="Pfam" id="PF17319">
    <property type="entry name" value="DUF5362"/>
    <property type="match status" value="1"/>
</dbReference>